<comment type="subcellular location">
    <subcellularLocation>
        <location evidence="2">Cell membrane</location>
        <topology evidence="2">Multi-pass membrane protein</topology>
    </subcellularLocation>
</comment>
<comment type="similarity">
    <text evidence="2">Belongs to the GRP transporter (TC 2.A.7.5) family.</text>
</comment>
<comment type="sequence caution" evidence="2">
    <conflict type="erroneous initiation">
        <sequence resource="EMBL-CDS" id="AAA56773"/>
    </conflict>
</comment>
<sequence length="287" mass="31236">MEGIFYALIPMFTWGSIGFVSNKIGGKPSQQTLGMTFGALLFSLAVWLIVRPEMTLQLWLFGILGGFIWSIGQTGQFHAMQYMGVSVANPLSSGSQLVLGSLIGVLVFHEWTRPMQFVVGSLALLLLIIGFYFSSKQDDANAQVNHLHNFSKGFRALTYSTIGYVMYAVLFNNIMKFEVLSVILPMAVGMVLGAITFMSFKISIDQYVIKNSVVGLLWGIGNIFMLLAASKAGLAIAFSFSQLGAIISIVGGILFLGETKTKKEMRWVVTGIICFIVGAILLGVVKS</sequence>
<reference key="1">
    <citation type="submission" date="1994-11" db="EMBL/GenBank/DDBJ databases">
        <title>Unknown putative membrane protein; multiple membrane domains.</title>
        <authorList>
            <person name="Weigel P.H."/>
            <person name="DeAngelis P.L."/>
        </authorList>
    </citation>
    <scope>NUCLEOTIDE SEQUENCE [GENOMIC DNA]</scope>
    <source>
        <strain>ATCC 21547 / S43 / Serotype M6</strain>
    </source>
</reference>
<reference key="2">
    <citation type="journal article" date="2004" name="J. Infect. Dis.">
        <title>Progress toward characterization of the group A Streptococcus metagenome: complete genome sequence of a macrolide-resistant serotype M6 strain.</title>
        <authorList>
            <person name="Banks D.J."/>
            <person name="Porcella S.F."/>
            <person name="Barbian K.D."/>
            <person name="Beres S.B."/>
            <person name="Philips L.E."/>
            <person name="Voyich J.M."/>
            <person name="DeLeo F.R."/>
            <person name="Martin J.M."/>
            <person name="Somerville G.A."/>
            <person name="Musser J.M."/>
        </authorList>
    </citation>
    <scope>NUCLEOTIDE SEQUENCE [LARGE SCALE GENOMIC DNA]</scope>
    <source>
        <strain>ATCC BAA-946 / MGAS10394</strain>
    </source>
</reference>
<evidence type="ECO:0000255" key="1"/>
<evidence type="ECO:0000305" key="2"/>
<name>Y1874_STRP6</name>
<gene>
    <name type="ordered locus">M6_Spy1874</name>
</gene>
<protein>
    <recommendedName>
        <fullName>Putative sugar uptake protein M6_Spy1874</fullName>
    </recommendedName>
</protein>
<keyword id="KW-1003">Cell membrane</keyword>
<keyword id="KW-0472">Membrane</keyword>
<keyword id="KW-0762">Sugar transport</keyword>
<keyword id="KW-0812">Transmembrane</keyword>
<keyword id="KW-1133">Transmembrane helix</keyword>
<keyword id="KW-0813">Transport</keyword>
<proteinExistence type="inferred from homology"/>
<dbReference type="EMBL" id="U17382">
    <property type="protein sequence ID" value="AAA56773.1"/>
    <property type="status" value="ALT_INIT"/>
    <property type="molecule type" value="Genomic_DNA"/>
</dbReference>
<dbReference type="EMBL" id="CP000003">
    <property type="protein sequence ID" value="AAT88009.1"/>
    <property type="molecule type" value="Genomic_DNA"/>
</dbReference>
<dbReference type="RefSeq" id="WP_002991450.1">
    <property type="nucleotide sequence ID" value="NC_006086.1"/>
</dbReference>
<dbReference type="SMR" id="Q5X9A4"/>
<dbReference type="KEGG" id="spa:M6_Spy1874"/>
<dbReference type="HOGENOM" id="CLU_076024_0_0_9"/>
<dbReference type="Proteomes" id="UP000001167">
    <property type="component" value="Chromosome"/>
</dbReference>
<dbReference type="GO" id="GO:0005886">
    <property type="term" value="C:plasma membrane"/>
    <property type="evidence" value="ECO:0007669"/>
    <property type="project" value="UniProtKB-SubCell"/>
</dbReference>
<dbReference type="GO" id="GO:0015144">
    <property type="term" value="F:carbohydrate transmembrane transporter activity"/>
    <property type="evidence" value="ECO:0007669"/>
    <property type="project" value="InterPro"/>
</dbReference>
<dbReference type="CDD" id="cd23110">
    <property type="entry name" value="GRP"/>
    <property type="match status" value="1"/>
</dbReference>
<dbReference type="InterPro" id="IPR010651">
    <property type="entry name" value="Sugar_transport"/>
</dbReference>
<dbReference type="NCBIfam" id="TIGR00776">
    <property type="entry name" value="RhaT"/>
    <property type="match status" value="1"/>
</dbReference>
<dbReference type="PANTHER" id="PTHR16119">
    <property type="entry name" value="TRANSMEMBRANE PROTEIN 144"/>
    <property type="match status" value="1"/>
</dbReference>
<dbReference type="PANTHER" id="PTHR16119:SF17">
    <property type="entry name" value="TRANSMEMBRANE PROTEIN 144"/>
    <property type="match status" value="1"/>
</dbReference>
<dbReference type="Pfam" id="PF06800">
    <property type="entry name" value="Sugar_transport"/>
    <property type="match status" value="1"/>
</dbReference>
<dbReference type="SUPFAM" id="SSF103481">
    <property type="entry name" value="Multidrug resistance efflux transporter EmrE"/>
    <property type="match status" value="1"/>
</dbReference>
<feature type="chain" id="PRO_0000213665" description="Putative sugar uptake protein M6_Spy1874">
    <location>
        <begin position="1"/>
        <end position="287"/>
    </location>
</feature>
<feature type="transmembrane region" description="Helical" evidence="1">
    <location>
        <begin position="4"/>
        <end position="26"/>
    </location>
</feature>
<feature type="transmembrane region" description="Helical" evidence="1">
    <location>
        <begin position="33"/>
        <end position="50"/>
    </location>
</feature>
<feature type="transmembrane region" description="Helical" evidence="1">
    <location>
        <begin position="55"/>
        <end position="72"/>
    </location>
</feature>
<feature type="transmembrane region" description="Helical" evidence="1">
    <location>
        <begin position="85"/>
        <end position="107"/>
    </location>
</feature>
<feature type="transmembrane region" description="Helical" evidence="1">
    <location>
        <begin position="117"/>
        <end position="134"/>
    </location>
</feature>
<feature type="transmembrane region" description="Helical" evidence="1">
    <location>
        <begin position="154"/>
        <end position="171"/>
    </location>
</feature>
<feature type="transmembrane region" description="Helical" evidence="1">
    <location>
        <begin position="181"/>
        <end position="200"/>
    </location>
</feature>
<feature type="transmembrane region" description="Helical" evidence="1">
    <location>
        <begin position="207"/>
        <end position="229"/>
    </location>
</feature>
<feature type="transmembrane region" description="Helical" evidence="1">
    <location>
        <begin position="234"/>
        <end position="256"/>
    </location>
</feature>
<feature type="transmembrane region" description="Helical" evidence="1">
    <location>
        <begin position="268"/>
        <end position="285"/>
    </location>
</feature>
<organism>
    <name type="scientific">Streptococcus pyogenes serotype M6 (strain ATCC BAA-946 / MGAS10394)</name>
    <dbReference type="NCBI Taxonomy" id="286636"/>
    <lineage>
        <taxon>Bacteria</taxon>
        <taxon>Bacillati</taxon>
        <taxon>Bacillota</taxon>
        <taxon>Bacilli</taxon>
        <taxon>Lactobacillales</taxon>
        <taxon>Streptococcaceae</taxon>
        <taxon>Streptococcus</taxon>
    </lineage>
</organism>
<accession>Q5X9A4</accession>
<accession>Q54615</accession>
<accession>Q99XH5</accession>